<proteinExistence type="inferred from homology"/>
<dbReference type="EC" id="3.4.22.-"/>
<dbReference type="EMBL" id="AJ277496">
    <property type="protein sequence ID" value="CAC16701.1"/>
    <property type="molecule type" value="Genomic_DNA"/>
</dbReference>
<dbReference type="SMR" id="Q9F3T4"/>
<dbReference type="GO" id="GO:0004197">
    <property type="term" value="F:cysteine-type endopeptidase activity"/>
    <property type="evidence" value="ECO:0007669"/>
    <property type="project" value="InterPro"/>
</dbReference>
<dbReference type="GO" id="GO:0006508">
    <property type="term" value="P:proteolysis"/>
    <property type="evidence" value="ECO:0007669"/>
    <property type="project" value="UniProtKB-KW"/>
</dbReference>
<dbReference type="Gene3D" id="3.90.70.20">
    <property type="match status" value="1"/>
</dbReference>
<dbReference type="InterPro" id="IPR038765">
    <property type="entry name" value="Papain-like_cys_pep_sf"/>
</dbReference>
<dbReference type="InterPro" id="IPR006473">
    <property type="entry name" value="Peptidase_C58_Yopt"/>
</dbReference>
<dbReference type="NCBIfam" id="TIGR01586">
    <property type="entry name" value="yopT_cys_prot"/>
    <property type="match status" value="1"/>
</dbReference>
<dbReference type="Pfam" id="PF03543">
    <property type="entry name" value="Peptidase_C58"/>
    <property type="match status" value="1"/>
</dbReference>
<dbReference type="SUPFAM" id="SSF54001">
    <property type="entry name" value="Cysteine proteinases"/>
    <property type="match status" value="1"/>
</dbReference>
<name>AVRP2_PSESJ</name>
<sequence length="269" mass="28979">MTIVSGHIGKHPSLTTVQAGSSASVENQMPDPAQFSDGRWKKLPTQLSSITLARFDQNICTNNHGISQRAMCFGLSLSWINMIHAGKDHVTPYASAERMRFLGSFEGVVHARTVHNFYRTEHKFLMEQASANPGVSSGAMAGTESLLQAAELKGLKLQPVLEDKSNSGLPFLIACKQSGRQVSTDEAALSSLCDAIVENKRGVMVIYSQEIAHALGFSVSSDGKRATLFDPNLGEFHTHSKALADTIENISSADGLPLIGVQVFASKIH</sequence>
<gene>
    <name type="primary">avrPpiC2</name>
</gene>
<feature type="chain" id="PRO_0000192509" description="Probable cysteine protease avirulence protein AvrPpiC2">
    <location>
        <begin position="1"/>
        <end position="269"/>
    </location>
</feature>
<feature type="region of interest" description="Disordered" evidence="2">
    <location>
        <begin position="1"/>
        <end position="39"/>
    </location>
</feature>
<feature type="compositionally biased region" description="Polar residues" evidence="2">
    <location>
        <begin position="13"/>
        <end position="27"/>
    </location>
</feature>
<feature type="active site" evidence="1">
    <location>
        <position position="72"/>
    </location>
</feature>
<feature type="active site" evidence="1">
    <location>
        <position position="213"/>
    </location>
</feature>
<feature type="active site" evidence="1">
    <location>
        <position position="230"/>
    </location>
</feature>
<comment type="function">
    <text>Potential cysteine protease. Avirulence protein, which may be essential during infection of plant cells from Pea and some Arabidopsis thaliana cultivars. May act by affecting the plant defense system. In plants lacking appropriate resistance (R) gene, it probably impairs the plant defense system and leads to the bacteria multiplication. In contrast, in plants containing the appropriate R protein, it is unable to induce disease symptoms, explaining its avirulence name.</text>
</comment>
<comment type="similarity">
    <text evidence="3">Belongs to the peptidase C58 family.</text>
</comment>
<reference key="1">
    <citation type="journal article" date="2001" name="Microbiology">
        <title>Highly conserved (DNA) sequences flank avirulence genes: isolation of novel avirulence genes from Pseudomonas syringae pv pisi.</title>
        <authorList>
            <person name="Arnold D.L."/>
            <person name="Jackson R.W."/>
            <person name="Fillingham A.J."/>
            <person name="Goss S.C."/>
            <person name="Taylor J.D."/>
            <person name="Mansfield J.W."/>
            <person name="Vivian A."/>
        </authorList>
    </citation>
    <scope>NUCLEOTIDE SEQUENCE [GENOMIC DNA]</scope>
    <source>
        <strain>299A / Race 1</strain>
    </source>
</reference>
<keyword id="KW-0378">Hydrolase</keyword>
<keyword id="KW-0645">Protease</keyword>
<keyword id="KW-0788">Thiol protease</keyword>
<keyword id="KW-0843">Virulence</keyword>
<accession>Q9F3T4</accession>
<evidence type="ECO:0000250" key="1"/>
<evidence type="ECO:0000256" key="2">
    <source>
        <dbReference type="SAM" id="MobiDB-lite"/>
    </source>
</evidence>
<evidence type="ECO:0000305" key="3"/>
<protein>
    <recommendedName>
        <fullName>Probable cysteine protease avirulence protein AvrPpiC2</fullName>
        <ecNumber>3.4.22.-</ecNumber>
    </recommendedName>
</protein>
<organism>
    <name type="scientific">Pseudomonas syringae pv. pisi</name>
    <dbReference type="NCBI Taxonomy" id="59510"/>
    <lineage>
        <taxon>Bacteria</taxon>
        <taxon>Pseudomonadati</taxon>
        <taxon>Pseudomonadota</taxon>
        <taxon>Gammaproteobacteria</taxon>
        <taxon>Pseudomonadales</taxon>
        <taxon>Pseudomonadaceae</taxon>
        <taxon>Pseudomonas</taxon>
        <taxon>Pseudomonas syringae</taxon>
    </lineage>
</organism>